<dbReference type="EMBL" id="X08090">
    <property type="protein sequence ID" value="CAA30887.1"/>
    <property type="molecule type" value="Genomic_RNA"/>
</dbReference>
<dbReference type="EMBL" id="X08092">
    <property type="protein sequence ID" value="CAA30891.1"/>
    <property type="molecule type" value="Genomic_RNA"/>
</dbReference>
<dbReference type="EMBL" id="CY009349">
    <property type="protein sequence ID" value="ABE12541.1"/>
    <property type="molecule type" value="Genomic_RNA"/>
</dbReference>
<dbReference type="SMR" id="P63232"/>
<dbReference type="IntAct" id="P63232">
    <property type="interactions" value="1"/>
</dbReference>
<dbReference type="GlyCosmos" id="P63232">
    <property type="glycosylation" value="1 site, No reported glycans"/>
</dbReference>
<dbReference type="Proteomes" id="UP000133870">
    <property type="component" value="Genome"/>
</dbReference>
<dbReference type="GO" id="GO:0020002">
    <property type="term" value="C:host cell plasma membrane"/>
    <property type="evidence" value="ECO:0007669"/>
    <property type="project" value="UniProtKB-SubCell"/>
</dbReference>
<dbReference type="GO" id="GO:0016020">
    <property type="term" value="C:membrane"/>
    <property type="evidence" value="ECO:0007669"/>
    <property type="project" value="UniProtKB-UniRule"/>
</dbReference>
<dbReference type="GO" id="GO:0055036">
    <property type="term" value="C:virion membrane"/>
    <property type="evidence" value="ECO:0007669"/>
    <property type="project" value="UniProtKB-SubCell"/>
</dbReference>
<dbReference type="GO" id="GO:0005216">
    <property type="term" value="F:monoatomic ion channel activity"/>
    <property type="evidence" value="ECO:0007669"/>
    <property type="project" value="UniProtKB-UniRule"/>
</dbReference>
<dbReference type="GO" id="GO:0015078">
    <property type="term" value="F:proton transmembrane transporter activity"/>
    <property type="evidence" value="ECO:0007669"/>
    <property type="project" value="UniProtKB-UniRule"/>
</dbReference>
<dbReference type="GO" id="GO:0051259">
    <property type="term" value="P:protein complex oligomerization"/>
    <property type="evidence" value="ECO:0007669"/>
    <property type="project" value="UniProtKB-UniRule"/>
</dbReference>
<dbReference type="GO" id="GO:0044694">
    <property type="term" value="P:symbiont genome entry into host cell via pore formation in plasma membrane"/>
    <property type="evidence" value="ECO:0007669"/>
    <property type="project" value="UniProtKB-UniRule"/>
</dbReference>
<dbReference type="GO" id="GO:0140321">
    <property type="term" value="P:symbiont-mediated suppression of host autophagy"/>
    <property type="evidence" value="ECO:0007669"/>
    <property type="project" value="UniProtKB-KW"/>
</dbReference>
<dbReference type="Gene3D" id="6.10.250.1640">
    <property type="match status" value="1"/>
</dbReference>
<dbReference type="HAMAP" id="MF_04069">
    <property type="entry name" value="INFV_M2"/>
    <property type="match status" value="1"/>
</dbReference>
<dbReference type="InterPro" id="IPR002089">
    <property type="entry name" value="Flu_M2"/>
</dbReference>
<dbReference type="Pfam" id="PF00599">
    <property type="entry name" value="Flu_M2"/>
    <property type="match status" value="1"/>
</dbReference>
<accession>P63232</accession>
<accession>P03490</accession>
<accession>Q1PUD8</accession>
<organismHost>
    <name type="scientific">Aves</name>
    <dbReference type="NCBI Taxonomy" id="8782"/>
</organismHost>
<organismHost>
    <name type="scientific">Cetacea</name>
    <name type="common">whales</name>
    <dbReference type="NCBI Taxonomy" id="9721"/>
</organismHost>
<organismHost>
    <name type="scientific">Homo sapiens</name>
    <name type="common">Human</name>
    <dbReference type="NCBI Taxonomy" id="9606"/>
</organismHost>
<organismHost>
    <name type="scientific">Phocidae</name>
    <name type="common">true seals</name>
    <dbReference type="NCBI Taxonomy" id="9709"/>
</organismHost>
<organismHost>
    <name type="scientific">Sus scrofa</name>
    <name type="common">Pig</name>
    <dbReference type="NCBI Taxonomy" id="9823"/>
</organismHost>
<protein>
    <recommendedName>
        <fullName evidence="1">Matrix protein 2</fullName>
    </recommendedName>
    <alternativeName>
        <fullName evidence="1">Proton channel protein M2</fullName>
    </alternativeName>
</protein>
<proteinExistence type="inferred from homology"/>
<feature type="chain" id="PRO_0000078889" description="Matrix protein 2">
    <location>
        <begin position="1"/>
        <end position="97"/>
    </location>
</feature>
<feature type="topological domain" description="Virion surface" evidence="1">
    <location>
        <begin position="1"/>
        <end position="22"/>
    </location>
</feature>
<feature type="transmembrane region" description="Helical; Signal-anchor for type III membrane protein" evidence="1">
    <location>
        <begin position="23"/>
        <end position="43"/>
    </location>
</feature>
<feature type="topological domain" description="Intravirion" evidence="1">
    <location>
        <begin position="44"/>
        <end position="97"/>
    </location>
</feature>
<feature type="region of interest" description="Disordered" evidence="2">
    <location>
        <begin position="60"/>
        <end position="88"/>
    </location>
</feature>
<feature type="compositionally biased region" description="Basic and acidic residues" evidence="2">
    <location>
        <begin position="71"/>
        <end position="80"/>
    </location>
</feature>
<feature type="site" description="Essential for channel activity, possibly by being protonated during channel activation, and by forming the channel gate and the selective filter" evidence="1">
    <location>
        <position position="37"/>
    </location>
</feature>
<feature type="site" description="Seems to be involved in pH gating" evidence="1">
    <location>
        <position position="41"/>
    </location>
</feature>
<feature type="modified residue" description="Phosphoserine; by host" evidence="1">
    <location>
        <position position="64"/>
    </location>
</feature>
<feature type="modified residue" description="Phosphoserine; by host" evidence="1">
    <location>
        <position position="82"/>
    </location>
</feature>
<feature type="modified residue" description="Phosphoserine; by host" evidence="1">
    <location>
        <position position="93"/>
    </location>
</feature>
<feature type="lipid moiety-binding region" description="S-palmitoyl cysteine; by host" evidence="1">
    <location>
        <position position="50"/>
    </location>
</feature>
<feature type="glycosylation site" description="N-linked (GlcNAc...) asparagine; by host" evidence="1">
    <location>
        <position position="20"/>
    </location>
</feature>
<feature type="disulfide bond" description="Interchain (with C-17)" evidence="1">
    <location>
        <position position="17"/>
    </location>
</feature>
<feature type="disulfide bond" description="Interchain (with C-19)" evidence="1">
    <location>
        <position position="19"/>
    </location>
</feature>
<sequence length="97" mass="11186">MSLLTEVETPIRNEWGCRCNDSSDPLVVAASIIGILHLILWILDRLFFKCIYRFFEHGLKRGPSTEGVPESMREEYRKEQQSAVDADDSHFVSIELE</sequence>
<name>M2_I73A5</name>
<keyword id="KW-0025">Alternative splicing</keyword>
<keyword id="KW-1015">Disulfide bond</keyword>
<keyword id="KW-0325">Glycoprotein</keyword>
<keyword id="KW-1032">Host cell membrane</keyword>
<keyword id="KW-1043">Host membrane</keyword>
<keyword id="KW-0945">Host-virus interaction</keyword>
<keyword id="KW-0375">Hydrogen ion transport</keyword>
<keyword id="KW-1083">Inhibition of host autophagy by virus</keyword>
<keyword id="KW-0407">Ion channel</keyword>
<keyword id="KW-0406">Ion transport</keyword>
<keyword id="KW-0449">Lipoprotein</keyword>
<keyword id="KW-0472">Membrane</keyword>
<keyword id="KW-0564">Palmitate</keyword>
<keyword id="KW-0597">Phosphoprotein</keyword>
<keyword id="KW-0735">Signal-anchor</keyword>
<keyword id="KW-0812">Transmembrane</keyword>
<keyword id="KW-1133">Transmembrane helix</keyword>
<keyword id="KW-0813">Transport</keyword>
<keyword id="KW-1182">Viral ion channel</keyword>
<keyword id="KW-0946">Virion</keyword>
<comment type="function">
    <text evidence="1">Forms a proton-selective ion channel that is necessary for the efficient release of the viral genome during virus entry. After attaching to the cell surface, the virion enters the cell by endocytosis. Acidification of the endosome triggers M2 ion channel activity. The influx of protons into virion interior is believed to disrupt interactions between the viral ribonucleoprotein (RNP), matrix protein 1 (M1), and lipid bilayers, thereby freeing the viral genome from interaction with viral proteins and enabling RNA segments to migrate to the host cell nucleus, where influenza virus RNA transcription and replication occur. Also plays a role in viral proteins secretory pathway. Elevates the intravesicular pH of normally acidic compartments, such as trans-Golgi network, preventing newly formed hemagglutinin from premature switching to the fusion-active conformation.</text>
</comment>
<comment type="activity regulation">
    <text>The M2 protein from most influenza A strains is inhibited by amantadine and rimantadine, resulting in viral uncoating incapacity. Emergence of amantadine-resistant variants is usually rapid.</text>
</comment>
<comment type="subunit">
    <text evidence="1">Homotetramer; composed of two disulfide-linked dimers held together by non-covalent interactions. May interact with matrix protein 1.</text>
</comment>
<comment type="subcellular location">
    <subcellularLocation>
        <location evidence="1">Virion membrane</location>
    </subcellularLocation>
    <subcellularLocation>
        <location evidence="1">Host apical cell membrane</location>
        <topology evidence="1">Single-pass type III membrane protein</topology>
    </subcellularLocation>
    <text evidence="1">Abundantly expressed at the apical plasma membrane in infected polarized epithelial cells, in close proximity to budding and assembled virions. Minor component of virions (only 16-20 molecules/virion).</text>
</comment>
<comment type="alternative products">
    <event type="alternative splicing"/>
    <isoform>
        <id>P63232-1</id>
        <id>P03490-1</id>
        <name>M2</name>
        <sequence type="displayed"/>
    </isoform>
    <isoform>
        <id>P63234-1</id>
        <id>P03486-1</id>
        <name>M1</name>
        <sequence type="external"/>
    </isoform>
    <text>Only the first 9 residues are shared by the 2 isoforms.</text>
</comment>
<comment type="domain">
    <text evidence="1">Cytoplasmic tail plays an important role in virion assembly and morphogenesis.</text>
</comment>
<comment type="miscellaneous">
    <text evidence="1">When the channel is activated, one or more imidazole moieties of His-37 probably become bi-protonated.</text>
</comment>
<comment type="similarity">
    <text evidence="1">Belongs to the influenza viruses matrix protein M2 family.</text>
</comment>
<reference key="1">
    <citation type="journal article" date="1989" name="Nucleic Acids Res.">
        <title>Nucleotide sequences of influenza A virus RNA segment 7: a comparison of five isolates.</title>
        <authorList>
            <person name="Zebedee S.L."/>
            <person name="Lamb R.A."/>
        </authorList>
    </citation>
    <scope>NUCLEOTIDE SEQUENCE [GENOMIC RNA]</scope>
</reference>
<reference key="2">
    <citation type="submission" date="2006-04" db="EMBL/GenBank/DDBJ databases">
        <title>The NIAID influenza genome sequencing project.</title>
        <authorList>
            <person name="Spiro D."/>
            <person name="Ghedin E."/>
            <person name="Sengamalay N."/>
            <person name="Halpin R."/>
            <person name="Boyne A."/>
            <person name="Zaborsky J."/>
            <person name="Feldblyum T."/>
            <person name="Subbu V."/>
            <person name="Sparenborg J."/>
            <person name="Shumway M."/>
            <person name="Sitz J."/>
            <person name="Katzel D."/>
            <person name="Koo H."/>
            <person name="Salzberg S.L."/>
            <person name="Griesemer S."/>
            <person name="St George K."/>
            <person name="Bennett R."/>
            <person name="Taylor J."/>
            <person name="Bennink J.R."/>
            <person name="Yewdell J.W."/>
            <person name="Bao Y."/>
            <person name="Bolotov P."/>
            <person name="Dernovoy D."/>
            <person name="Kiryutin B."/>
            <person name="Lipman D.J."/>
            <person name="Tatusova T."/>
        </authorList>
    </citation>
    <scope>NUCLEOTIDE SEQUENCE [GENOMIC RNA] OF 1-96</scope>
</reference>
<reference key="3">
    <citation type="journal article" date="2004" name="Virus Res.">
        <title>Assembly and budding of influenza virus.</title>
        <authorList>
            <person name="Nayak D.P."/>
            <person name="Hui E.K."/>
            <person name="Barman S."/>
        </authorList>
    </citation>
    <scope>REVIEW</scope>
</reference>
<reference key="4">
    <citation type="journal article" date="2003" name="FEBS Lett.">
        <title>Proton conduction through the M2 protein of the influenza A virus; a quantitative, mechanistic analysis of experimental data.</title>
        <authorList>
            <person name="Lear J.D."/>
        </authorList>
    </citation>
    <scope>REVIEW</scope>
</reference>
<reference key="5">
    <citation type="journal article" date="2003" name="FEBS Lett.">
        <title>Computational studies of proton transport through the M2 channel.</title>
        <authorList>
            <person name="Wu Y."/>
            <person name="Voth G.A."/>
        </authorList>
    </citation>
    <scope>REVIEW</scope>
</reference>
<organism>
    <name type="scientific">Influenza A virus (strain A/Port Chalmers/1/1973 H3N2)</name>
    <dbReference type="NCBI Taxonomy" id="385624"/>
    <lineage>
        <taxon>Viruses</taxon>
        <taxon>Riboviria</taxon>
        <taxon>Orthornavirae</taxon>
        <taxon>Negarnaviricota</taxon>
        <taxon>Polyploviricotina</taxon>
        <taxon>Insthoviricetes</taxon>
        <taxon>Articulavirales</taxon>
        <taxon>Orthomyxoviridae</taxon>
        <taxon>Alphainfluenzavirus</taxon>
        <taxon>Alphainfluenzavirus influenzae</taxon>
        <taxon>Influenza A virus</taxon>
    </lineage>
</organism>
<gene>
    <name evidence="1" type="primary">M</name>
</gene>
<evidence type="ECO:0000255" key="1">
    <source>
        <dbReference type="HAMAP-Rule" id="MF_04069"/>
    </source>
</evidence>
<evidence type="ECO:0000256" key="2">
    <source>
        <dbReference type="SAM" id="MobiDB-lite"/>
    </source>
</evidence>